<sequence length="68" mass="7379">MSKLGALLTICLLLFSLTAVPLDGDQHADQPAQRLQDRIPTEDHPLFDPNKRCCPPVACNMGCKPCCG</sequence>
<feature type="signal peptide" evidence="2">
    <location>
        <begin position="1"/>
        <end position="19"/>
    </location>
</feature>
<feature type="propeptide" id="PRO_0000246055" evidence="5">
    <location>
        <begin position="20"/>
        <end position="52"/>
    </location>
</feature>
<feature type="peptide" id="PRO_0000246056" description="Conotoxin tx3b" evidence="3">
    <location>
        <begin position="53"/>
        <end position="67"/>
    </location>
</feature>
<feature type="modified residue" description="Methionine sulfoxide; partial" evidence="4">
    <location>
        <position position="61"/>
    </location>
</feature>
<feature type="modified residue" description="Cysteine amide" evidence="3 4">
    <location>
        <position position="67"/>
    </location>
</feature>
<feature type="disulfide bond" evidence="1">
    <location>
        <begin position="53"/>
        <end position="67"/>
    </location>
</feature>
<feature type="disulfide bond" evidence="1">
    <location>
        <begin position="54"/>
        <end position="63"/>
    </location>
</feature>
<feature type="disulfide bond" evidence="1">
    <location>
        <begin position="59"/>
        <end position="66"/>
    </location>
</feature>
<organism>
    <name type="scientific">Conus textile</name>
    <name type="common">Cloth-of-gold cone</name>
    <dbReference type="NCBI Taxonomy" id="6494"/>
    <lineage>
        <taxon>Eukaryota</taxon>
        <taxon>Metazoa</taxon>
        <taxon>Spiralia</taxon>
        <taxon>Lophotrochozoa</taxon>
        <taxon>Mollusca</taxon>
        <taxon>Gastropoda</taxon>
        <taxon>Caenogastropoda</taxon>
        <taxon>Neogastropoda</taxon>
        <taxon>Conoidea</taxon>
        <taxon>Conidae</taxon>
        <taxon>Conus</taxon>
        <taxon>Cylinder</taxon>
    </lineage>
</organism>
<proteinExistence type="evidence at protein level"/>
<accession>P0C1N8</accession>
<reference key="1">
    <citation type="journal article" date="2005" name="Biochemistry">
        <title>Definition of the M-conotoxin superfamily: characterization of novel peptides from molluscivorous Conus venoms.</title>
        <authorList>
            <person name="Corpuz G.P."/>
            <person name="Jacobsen R.B."/>
            <person name="Jimenez E.C."/>
            <person name="Watkins M."/>
            <person name="Walker C."/>
            <person name="Colledge C."/>
            <person name="Garrett J.E."/>
            <person name="McDougal O."/>
            <person name="Li W."/>
            <person name="Gray W.R."/>
            <person name="Hillyard D.R."/>
            <person name="Rivier J."/>
            <person name="McIntosh J.M."/>
            <person name="Cruz L.J."/>
            <person name="Olivera B.M."/>
        </authorList>
    </citation>
    <scope>NUCLEOTIDE SEQUENCE [MRNA]</scope>
    <scope>PROTEIN SEQUENCE OF 53-67</scope>
    <scope>MASS SPECTROMETRY</scope>
    <scope>AMIDATION AT CYS-67</scope>
    <scope>SUBCELLULAR LOCATION</scope>
    <source>
        <tissue>Venom</tissue>
        <tissue>Venom duct</tissue>
    </source>
</reference>
<reference key="2">
    <citation type="journal article" date="2012" name="J. Proteome Res.">
        <title>Constrained de novo sequencing of conotoxins.</title>
        <authorList>
            <person name="Bhatia S."/>
            <person name="Kil Y.J."/>
            <person name="Ueberheide B."/>
            <person name="Chait B.T."/>
            <person name="Tayo L."/>
            <person name="Cruz L."/>
            <person name="Lu B."/>
            <person name="Yates J.R. III"/>
            <person name="Bern M."/>
        </authorList>
    </citation>
    <scope>IDENTIFICATION BY MASS SPECTROMETRY</scope>
    <scope>SUBCELLULAR LOCATION</scope>
    <scope>OXIDATION AT MET-61</scope>
    <scope>AMIDATION AT CYS-67</scope>
    <source>
        <tissue>Venom</tissue>
    </source>
</reference>
<name>M3B_CONTE</name>
<dbReference type="ConoServer" id="1401">
    <property type="toxin name" value="TxIIIB precursor"/>
</dbReference>
<dbReference type="GO" id="GO:0005576">
    <property type="term" value="C:extracellular region"/>
    <property type="evidence" value="ECO:0007669"/>
    <property type="project" value="UniProtKB-SubCell"/>
</dbReference>
<dbReference type="GO" id="GO:0008200">
    <property type="term" value="F:ion channel inhibitor activity"/>
    <property type="evidence" value="ECO:0007669"/>
    <property type="project" value="InterPro"/>
</dbReference>
<dbReference type="GO" id="GO:0090729">
    <property type="term" value="F:toxin activity"/>
    <property type="evidence" value="ECO:0007669"/>
    <property type="project" value="UniProtKB-KW"/>
</dbReference>
<dbReference type="InterPro" id="IPR004214">
    <property type="entry name" value="Conotoxin"/>
</dbReference>
<dbReference type="Pfam" id="PF02950">
    <property type="entry name" value="Conotoxin"/>
    <property type="match status" value="1"/>
</dbReference>
<comment type="function">
    <text>Intracranial injection into mice causes scratching, hyperactivity and circular motion.</text>
</comment>
<comment type="subcellular location">
    <subcellularLocation>
        <location evidence="3">Secreted</location>
    </subcellularLocation>
</comment>
<comment type="tissue specificity">
    <text evidence="6">Expressed by the venom duct.</text>
</comment>
<comment type="domain">
    <text evidence="5">The cysteine framework is III (CC-C-C-CC). Classified in the M-2 branch, since 2 residues stand between the fourth and the fifth cysteine residues.</text>
</comment>
<comment type="mass spectrometry" mass="1521.4" method="Electrospray" evidence="3"/>
<comment type="similarity">
    <text evidence="5">Belongs to the conotoxin M superfamily.</text>
</comment>
<protein>
    <recommendedName>
        <fullName>Conotoxin tx3b</fullName>
    </recommendedName>
    <alternativeName>
        <fullName>Tx3.3</fullName>
    </alternativeName>
</protein>
<evidence type="ECO:0000250" key="1">
    <source>
        <dbReference type="UniProtKB" id="P0CI24"/>
    </source>
</evidence>
<evidence type="ECO:0000255" key="2"/>
<evidence type="ECO:0000269" key="3">
    <source>
    </source>
</evidence>
<evidence type="ECO:0000269" key="4">
    <source>
    </source>
</evidence>
<evidence type="ECO:0000305" key="5"/>
<evidence type="ECO:0000305" key="6">
    <source>
    </source>
</evidence>
<keyword id="KW-0027">Amidation</keyword>
<keyword id="KW-0165">Cleavage on pair of basic residues</keyword>
<keyword id="KW-0903">Direct protein sequencing</keyword>
<keyword id="KW-1015">Disulfide bond</keyword>
<keyword id="KW-0528">Neurotoxin</keyword>
<keyword id="KW-0558">Oxidation</keyword>
<keyword id="KW-0964">Secreted</keyword>
<keyword id="KW-0732">Signal</keyword>
<keyword id="KW-0800">Toxin</keyword>